<keyword id="KW-0325">Glycoprotein</keyword>
<keyword id="KW-0393">Immunoglobulin domain</keyword>
<keyword id="KW-0677">Repeat</keyword>
<accession>P23084</accession>
<protein>
    <recommendedName>
        <fullName>Ig heavy chain C region</fullName>
    </recommendedName>
    <alternativeName>
        <fullName>Clone 6125</fullName>
    </alternativeName>
</protein>
<proteinExistence type="evidence at transcript level"/>
<dbReference type="EMBL" id="X07783">
    <property type="protein sequence ID" value="CAA30616.1"/>
    <property type="molecule type" value="mRNA"/>
</dbReference>
<dbReference type="PIR" id="S01851">
    <property type="entry name" value="HVRKC5"/>
</dbReference>
<dbReference type="SMR" id="P23084"/>
<dbReference type="CDD" id="cd00098">
    <property type="entry name" value="IgC1"/>
    <property type="match status" value="1"/>
</dbReference>
<dbReference type="CDD" id="cd05768">
    <property type="entry name" value="IgC1_CH3_IgAGD_CH4_IgAEM"/>
    <property type="match status" value="1"/>
</dbReference>
<dbReference type="FunFam" id="2.60.40.10:FF:000463">
    <property type="entry name" value="Immunoglobulin heavy constant gamma 1"/>
    <property type="match status" value="2"/>
</dbReference>
<dbReference type="Gene3D" id="2.60.40.10">
    <property type="entry name" value="Immunoglobulins"/>
    <property type="match status" value="3"/>
</dbReference>
<dbReference type="InterPro" id="IPR007110">
    <property type="entry name" value="Ig-like_dom"/>
</dbReference>
<dbReference type="InterPro" id="IPR036179">
    <property type="entry name" value="Ig-like_dom_sf"/>
</dbReference>
<dbReference type="InterPro" id="IPR013783">
    <property type="entry name" value="Ig-like_fold"/>
</dbReference>
<dbReference type="InterPro" id="IPR003006">
    <property type="entry name" value="Ig/MHC_CS"/>
</dbReference>
<dbReference type="InterPro" id="IPR003597">
    <property type="entry name" value="Ig_C1-set"/>
</dbReference>
<dbReference type="InterPro" id="IPR050380">
    <property type="entry name" value="Immune_Resp_Modulators"/>
</dbReference>
<dbReference type="PANTHER" id="PTHR23411">
    <property type="entry name" value="TAPASIN"/>
    <property type="match status" value="1"/>
</dbReference>
<dbReference type="Pfam" id="PF07654">
    <property type="entry name" value="C1-set"/>
    <property type="match status" value="3"/>
</dbReference>
<dbReference type="SMART" id="SM00407">
    <property type="entry name" value="IGc1"/>
    <property type="match status" value="3"/>
</dbReference>
<dbReference type="SUPFAM" id="SSF48726">
    <property type="entry name" value="Immunoglobulin"/>
    <property type="match status" value="3"/>
</dbReference>
<dbReference type="PROSITE" id="PS50835">
    <property type="entry name" value="IG_LIKE"/>
    <property type="match status" value="3"/>
</dbReference>
<dbReference type="PROSITE" id="PS00290">
    <property type="entry name" value="IG_MHC"/>
    <property type="match status" value="3"/>
</dbReference>
<sequence length="370" mass="40587">SQLTITDSEVGSSKIYCEVRRGESLWIKEIPDCKGDIVHPTVILTQTSSEEITSSRFATVVCSIIDFHPEAITVNWLKDGHPMESGFVTSPACETNGNFSATSRLTVPAREWFTNTVYTCQVSHQAATQSRNITGSPDSSECNHPAIKLLPPSIEQVLLEATVTLTCVVSNAPYGVNVSWTQEQKPLKSEIAVQPGEDPDSVISTVDISTQAWLSEAVFYCVVSHQDLPTPLRDSIHKEAWKDLREPSVSVLLPPAEEISAERFLSLTCLVRGFSPREIFVKWTVNDKSVNPGNYKNTEVMAENDKSSFFIYSLLSIAAEEWASGASYSCVVGHEAIPLKIINRTVNKSSGKPSFVNISLALLDTVNSCQ</sequence>
<organism>
    <name type="scientific">Heterodontus francisci</name>
    <name type="common">Horn shark</name>
    <name type="synonym">Cestracion francisci</name>
    <dbReference type="NCBI Taxonomy" id="7792"/>
    <lineage>
        <taxon>Eukaryota</taxon>
        <taxon>Metazoa</taxon>
        <taxon>Chordata</taxon>
        <taxon>Craniata</taxon>
        <taxon>Vertebrata</taxon>
        <taxon>Chondrichthyes</taxon>
        <taxon>Elasmobranchii</taxon>
        <taxon>Galeomorphii</taxon>
        <taxon>Heterodontoidea</taxon>
        <taxon>Heterodontiformes</taxon>
        <taxon>Heterodontidae</taxon>
        <taxon>Heterodontus</taxon>
    </lineage>
</organism>
<reference key="1">
    <citation type="journal article" date="1988" name="EMBO J.">
        <title>Complete structure and organization of immunoglobulin heavy chain constant region genes in a phylogenetically primitive vertebrate.</title>
        <authorList>
            <person name="Kokubu F."/>
            <person name="Hinds K."/>
            <person name="Litman R."/>
            <person name="Shamblott M.J."/>
            <person name="Litman G.W."/>
        </authorList>
    </citation>
    <scope>NUCLEOTIDE SEQUENCE [MRNA]</scope>
</reference>
<evidence type="ECO:0000255" key="1"/>
<feature type="chain" id="PRO_0000153629" description="Ig heavy chain C region">
    <location>
        <begin position="1" status="less than"/>
        <end position="370"/>
    </location>
</feature>
<feature type="domain" description="Ig-like 1">
    <location>
        <begin position="40"/>
        <end position="134"/>
    </location>
</feature>
<feature type="domain" description="Ig-like 2">
    <location>
        <begin position="145"/>
        <end position="237"/>
    </location>
</feature>
<feature type="domain" description="Ig-like 3">
    <location>
        <begin position="247"/>
        <end position="347"/>
    </location>
</feature>
<feature type="glycosylation site" description="N-linked (GlcNAc...) asparagine" evidence="1">
    <location>
        <position position="98"/>
    </location>
</feature>
<feature type="glycosylation site" description="N-linked (GlcNAc...) asparagine" evidence="1">
    <location>
        <position position="132"/>
    </location>
</feature>
<feature type="glycosylation site" description="N-linked (GlcNAc...) asparagine" evidence="1">
    <location>
        <position position="177"/>
    </location>
</feature>
<feature type="glycosylation site" description="N-linked (GlcNAc...) asparagine" evidence="1">
    <location>
        <position position="343"/>
    </location>
</feature>
<feature type="glycosylation site" description="N-linked (GlcNAc...) asparagine" evidence="1">
    <location>
        <position position="347"/>
    </location>
</feature>
<feature type="glycosylation site" description="N-linked (GlcNAc...) asparagine" evidence="1">
    <location>
        <position position="357"/>
    </location>
</feature>
<feature type="non-terminal residue">
    <location>
        <position position="1"/>
    </location>
</feature>
<name>HVC1_HETFR</name>